<keyword id="KW-0158">Chromosome</keyword>
<keyword id="KW-0903">Direct protein sequencing</keyword>
<keyword id="KW-0238">DNA-binding</keyword>
<keyword id="KW-0539">Nucleus</keyword>
<keyword id="KW-0597">Phosphoprotein</keyword>
<evidence type="ECO:0000250" key="1"/>
<evidence type="ECO:0000256" key="2">
    <source>
        <dbReference type="SAM" id="MobiDB-lite"/>
    </source>
</evidence>
<evidence type="ECO:0000269" key="3">
    <source>
    </source>
</evidence>
<reference key="1">
    <citation type="journal article" date="1987" name="J. Biochem.">
        <title>Tetrahymena histone H1. Isolation and amino acid sequence lacking the central hydrophobic domain conserved in other H1 histones.</title>
        <authorList>
            <person name="Hayashi T."/>
            <person name="Hayashi H."/>
            <person name="Iwai K."/>
        </authorList>
    </citation>
    <scope>PROTEIN SEQUENCE</scope>
    <scope>PHOSPHORYLATION AT SER-83 AND THR-117</scope>
</reference>
<organism>
    <name type="scientific">Tetrahymena pyriformis</name>
    <dbReference type="NCBI Taxonomy" id="5908"/>
    <lineage>
        <taxon>Eukaryota</taxon>
        <taxon>Sar</taxon>
        <taxon>Alveolata</taxon>
        <taxon>Ciliophora</taxon>
        <taxon>Intramacronucleata</taxon>
        <taxon>Oligohymenophorea</taxon>
        <taxon>Hymenostomatida</taxon>
        <taxon>Tetrahymenina</taxon>
        <taxon>Tetrahymenidae</taxon>
        <taxon>Tetrahymena</taxon>
    </lineage>
</organism>
<name>H1_TETPY</name>
<gene>
    <name type="primary">HHO</name>
</gene>
<accession>P12305</accession>
<proteinExistence type="evidence at protein level"/>
<protein>
    <recommendedName>
        <fullName>Histone H1</fullName>
    </recommendedName>
</protein>
<sequence>GKQSTSKSVTREKKDVKKTVAPKKAIKKVTKKSTTPVKTSKAAPASTTPIKDTTPVKADAKKIHRTKTMKESVSDAKKTVHKSAGDKKLSRSQKPAKREAAKKIVHPAKKAAAKPKTAKKEVKKDTKPVKKDAKKDTKPVKKDAKKDTKPAKKDTKKATKGSKKN</sequence>
<dbReference type="PIR" id="A27195">
    <property type="entry name" value="A27195"/>
</dbReference>
<dbReference type="SMR" id="P12305"/>
<dbReference type="iPTMnet" id="P12305"/>
<dbReference type="GO" id="GO:0005694">
    <property type="term" value="C:chromosome"/>
    <property type="evidence" value="ECO:0007669"/>
    <property type="project" value="UniProtKB-SubCell"/>
</dbReference>
<dbReference type="GO" id="GO:0005634">
    <property type="term" value="C:nucleus"/>
    <property type="evidence" value="ECO:0007669"/>
    <property type="project" value="UniProtKB-SubCell"/>
</dbReference>
<dbReference type="GO" id="GO:0003677">
    <property type="term" value="F:DNA binding"/>
    <property type="evidence" value="ECO:0007669"/>
    <property type="project" value="UniProtKB-KW"/>
</dbReference>
<comment type="function">
    <text>Histones H1 are necessary for the condensation of nucleosome chains into higher-order structures.</text>
</comment>
<comment type="subcellular location">
    <subcellularLocation>
        <location>Nucleus</location>
    </subcellularLocation>
    <subcellularLocation>
        <location>Chromosome</location>
    </subcellularLocation>
    <text>Macronuclei.</text>
</comment>
<comment type="PTM">
    <text evidence="1 3">Cell-growth/division-associated phosphorylation by a CDC2-like kinase (By similarity). Is additionally phosphorylated on either Ser-33, Thr-34 or Thr-35, and on either Thr-39 or Ser-40.</text>
</comment>
<feature type="chain" id="PRO_0000195989" description="Histone H1">
    <location>
        <begin position="1"/>
        <end position="165"/>
    </location>
</feature>
<feature type="region of interest" description="Disordered" evidence="2">
    <location>
        <begin position="1"/>
        <end position="165"/>
    </location>
</feature>
<feature type="compositionally biased region" description="Basic and acidic residues" evidence="2">
    <location>
        <begin position="9"/>
        <end position="18"/>
    </location>
</feature>
<feature type="compositionally biased region" description="Basic residues" evidence="2">
    <location>
        <begin position="20"/>
        <end position="31"/>
    </location>
</feature>
<feature type="compositionally biased region" description="Low complexity" evidence="2">
    <location>
        <begin position="32"/>
        <end position="41"/>
    </location>
</feature>
<feature type="compositionally biased region" description="Basic and acidic residues" evidence="2">
    <location>
        <begin position="68"/>
        <end position="89"/>
    </location>
</feature>
<feature type="compositionally biased region" description="Basic residues" evidence="2">
    <location>
        <begin position="103"/>
        <end position="117"/>
    </location>
</feature>
<feature type="compositionally biased region" description="Basic and acidic residues" evidence="2">
    <location>
        <begin position="118"/>
        <end position="157"/>
    </location>
</feature>
<feature type="modified residue" description="Phosphothreonine" evidence="1">
    <location>
        <position position="48"/>
    </location>
</feature>
<feature type="modified residue" description="Phosphothreonine" evidence="1">
    <location>
        <position position="54"/>
    </location>
</feature>
<feature type="modified residue" description="Phosphoserine" evidence="3">
    <location>
        <position position="83"/>
    </location>
</feature>
<feature type="modified residue" description="Phosphothreonine" evidence="3">
    <location>
        <position position="117"/>
    </location>
</feature>